<organism>
    <name type="scientific">Helicobacter pylori (strain ATCC 700392 / 26695)</name>
    <name type="common">Campylobacter pylori</name>
    <dbReference type="NCBI Taxonomy" id="85962"/>
    <lineage>
        <taxon>Bacteria</taxon>
        <taxon>Pseudomonadati</taxon>
        <taxon>Campylobacterota</taxon>
        <taxon>Epsilonproteobacteria</taxon>
        <taxon>Campylobacterales</taxon>
        <taxon>Helicobacteraceae</taxon>
        <taxon>Helicobacter</taxon>
    </lineage>
</organism>
<comment type="function">
    <text evidence="1">Catalyzes the phosphorylation of D-glycero-D-manno-heptose 7-phosphate at the C-1 position to selectively form D-glycero-beta-D-manno-heptose-1,7-bisphosphate.</text>
</comment>
<comment type="function">
    <text evidence="1">Catalyzes the ADP transfer from ATP to D-glycero-beta-D-manno-heptose 1-phosphate, yielding ADP-D-glycero-beta-D-manno-heptose.</text>
</comment>
<comment type="catalytic activity">
    <reaction evidence="1">
        <text>D-glycero-beta-D-manno-heptose 7-phosphate + ATP = D-glycero-beta-D-manno-heptose 1,7-bisphosphate + ADP + H(+)</text>
        <dbReference type="Rhea" id="RHEA:27473"/>
        <dbReference type="ChEBI" id="CHEBI:15378"/>
        <dbReference type="ChEBI" id="CHEBI:30616"/>
        <dbReference type="ChEBI" id="CHEBI:60204"/>
        <dbReference type="ChEBI" id="CHEBI:60208"/>
        <dbReference type="ChEBI" id="CHEBI:456216"/>
        <dbReference type="EC" id="2.7.1.167"/>
    </reaction>
</comment>
<comment type="catalytic activity">
    <reaction evidence="1">
        <text>D-glycero-beta-D-manno-heptose 1-phosphate + ATP + H(+) = ADP-D-glycero-beta-D-manno-heptose + diphosphate</text>
        <dbReference type="Rhea" id="RHEA:27465"/>
        <dbReference type="ChEBI" id="CHEBI:15378"/>
        <dbReference type="ChEBI" id="CHEBI:30616"/>
        <dbReference type="ChEBI" id="CHEBI:33019"/>
        <dbReference type="ChEBI" id="CHEBI:59967"/>
        <dbReference type="ChEBI" id="CHEBI:61593"/>
        <dbReference type="EC" id="2.7.7.70"/>
    </reaction>
</comment>
<comment type="pathway">
    <text evidence="1">Nucleotide-sugar biosynthesis; ADP-L-glycero-beta-D-manno-heptose biosynthesis; ADP-L-glycero-beta-D-manno-heptose from D-glycero-beta-D-manno-heptose 7-phosphate: step 1/4.</text>
</comment>
<comment type="pathway">
    <text evidence="1">Nucleotide-sugar biosynthesis; ADP-L-glycero-beta-D-manno-heptose biosynthesis; ADP-L-glycero-beta-D-manno-heptose from D-glycero-beta-D-manno-heptose 7-phosphate: step 3/4.</text>
</comment>
<comment type="pathway">
    <text>Bacterial outer membrane biogenesis; LPS core biosynthesis.</text>
</comment>
<comment type="subunit">
    <text evidence="1">Homodimer.</text>
</comment>
<comment type="similarity">
    <text evidence="1">In the N-terminal section; belongs to the carbohydrate kinase PfkB family.</text>
</comment>
<comment type="similarity">
    <text evidence="1">In the C-terminal section; belongs to the cytidylyltransferase family.</text>
</comment>
<accession>O25529</accession>
<feature type="chain" id="PRO_0000080115" description="Bifunctional protein HldE">
    <location>
        <begin position="1"/>
        <end position="461"/>
    </location>
</feature>
<feature type="region of interest" description="Ribokinase">
    <location>
        <begin position="1"/>
        <end position="315"/>
    </location>
</feature>
<feature type="region of interest" description="Cytidylyltransferase">
    <location>
        <begin position="332"/>
        <end position="461"/>
    </location>
</feature>
<feature type="active site" evidence="1">
    <location>
        <position position="260"/>
    </location>
</feature>
<feature type="binding site" evidence="1">
    <location>
        <begin position="191"/>
        <end position="194"/>
    </location>
    <ligand>
        <name>ATP</name>
        <dbReference type="ChEBI" id="CHEBI:30616"/>
    </ligand>
</feature>
<evidence type="ECO:0000255" key="1">
    <source>
        <dbReference type="HAMAP-Rule" id="MF_01603"/>
    </source>
</evidence>
<sequence length="461" mass="50689">MKKILVIGDLIADYYLWGKSERLSPEAPVPVLEVQRESKNLGGAANVANNLISLKAKVFLCGVVGDDLEGEHFISALKARGIDASGILIDKTRCTTLKTRIIAQNQQIARVDKEIKDPLNADLRKKLLDFFTEKIQEIDGVILSDYNKGVLDFELTQAMIALANQHHKLILCDPKGKDYSKYSHASLITPNRTELEHALHLKLDSHANLSKALQILKETYHIAMPLVTLSEQGIAFLEKGELVNCPTIAKEVYDVTGAGDTVIASLTLSLLESMSLKDACEFANAAAAVVVGKMGSALASLEEIALILNQTHPKILSLEKLLETLDQQKIIFTNGCFDLLHKGHASYLQKAKALGDILIVGLNSDASIKRLKGDKRPIVSEKDRAFLLASLSCVDYVVVFEEDTPIKLIQALKPDILVKGADYLNKEVIGSEFAKETHLMEFEEGYSTSAIIEKIKRTCND</sequence>
<name>HLDE_HELPY</name>
<dbReference type="EC" id="2.7.1.167" evidence="1"/>
<dbReference type="EC" id="2.7.7.70" evidence="1"/>
<dbReference type="EMBL" id="AE000511">
    <property type="protein sequence ID" value="AAD07904.1"/>
    <property type="molecule type" value="Genomic_DNA"/>
</dbReference>
<dbReference type="PIR" id="B64627">
    <property type="entry name" value="B64627"/>
</dbReference>
<dbReference type="RefSeq" id="NP_207652.1">
    <property type="nucleotide sequence ID" value="NC_000915.1"/>
</dbReference>
<dbReference type="SMR" id="O25529"/>
<dbReference type="DIP" id="DIP-3359N"/>
<dbReference type="FunCoup" id="O25529">
    <property type="interactions" value="214"/>
</dbReference>
<dbReference type="IntAct" id="O25529">
    <property type="interactions" value="3"/>
</dbReference>
<dbReference type="MINT" id="O25529"/>
<dbReference type="STRING" id="85962.HP_0858"/>
<dbReference type="PaxDb" id="85962-C694_04395"/>
<dbReference type="EnsemblBacteria" id="AAD07904">
    <property type="protein sequence ID" value="AAD07904"/>
    <property type="gene ID" value="HP_0858"/>
</dbReference>
<dbReference type="KEGG" id="heo:C694_04395"/>
<dbReference type="KEGG" id="hpy:HP_0858"/>
<dbReference type="PATRIC" id="fig|85962.47.peg.912"/>
<dbReference type="eggNOG" id="COG0615">
    <property type="taxonomic scope" value="Bacteria"/>
</dbReference>
<dbReference type="eggNOG" id="COG2870">
    <property type="taxonomic scope" value="Bacteria"/>
</dbReference>
<dbReference type="InParanoid" id="O25529"/>
<dbReference type="OrthoDB" id="9802794at2"/>
<dbReference type="PhylomeDB" id="O25529"/>
<dbReference type="UniPathway" id="UPA00356">
    <property type="reaction ID" value="UER00437"/>
</dbReference>
<dbReference type="UniPathway" id="UPA00356">
    <property type="reaction ID" value="UER00439"/>
</dbReference>
<dbReference type="UniPathway" id="UPA00958"/>
<dbReference type="Proteomes" id="UP000000429">
    <property type="component" value="Chromosome"/>
</dbReference>
<dbReference type="GO" id="GO:0005524">
    <property type="term" value="F:ATP binding"/>
    <property type="evidence" value="ECO:0007669"/>
    <property type="project" value="UniProtKB-UniRule"/>
</dbReference>
<dbReference type="GO" id="GO:0033785">
    <property type="term" value="F:heptose 7-phosphate kinase activity"/>
    <property type="evidence" value="ECO:0007669"/>
    <property type="project" value="UniProtKB-UniRule"/>
</dbReference>
<dbReference type="GO" id="GO:0033786">
    <property type="term" value="F:heptose-1-phosphate adenylyltransferase activity"/>
    <property type="evidence" value="ECO:0007669"/>
    <property type="project" value="UniProtKB-UniRule"/>
</dbReference>
<dbReference type="GO" id="GO:0016773">
    <property type="term" value="F:phosphotransferase activity, alcohol group as acceptor"/>
    <property type="evidence" value="ECO:0007669"/>
    <property type="project" value="InterPro"/>
</dbReference>
<dbReference type="GO" id="GO:0097171">
    <property type="term" value="P:ADP-L-glycero-beta-D-manno-heptose biosynthetic process"/>
    <property type="evidence" value="ECO:0007669"/>
    <property type="project" value="UniProtKB-UniPathway"/>
</dbReference>
<dbReference type="GO" id="GO:0009244">
    <property type="term" value="P:lipopolysaccharide core region biosynthetic process"/>
    <property type="evidence" value="ECO:0007669"/>
    <property type="project" value="UniProtKB-UniPathway"/>
</dbReference>
<dbReference type="CDD" id="cd01172">
    <property type="entry name" value="RfaE_like"/>
    <property type="match status" value="1"/>
</dbReference>
<dbReference type="Gene3D" id="3.40.1190.20">
    <property type="match status" value="1"/>
</dbReference>
<dbReference type="Gene3D" id="3.40.50.620">
    <property type="entry name" value="HUPs"/>
    <property type="match status" value="1"/>
</dbReference>
<dbReference type="HAMAP" id="MF_01603">
    <property type="entry name" value="HldE"/>
    <property type="match status" value="1"/>
</dbReference>
<dbReference type="InterPro" id="IPR023030">
    <property type="entry name" value="Bifunc_HldE"/>
</dbReference>
<dbReference type="InterPro" id="IPR004821">
    <property type="entry name" value="Cyt_trans-like"/>
</dbReference>
<dbReference type="InterPro" id="IPR011611">
    <property type="entry name" value="PfkB_dom"/>
</dbReference>
<dbReference type="InterPro" id="IPR011913">
    <property type="entry name" value="RfaE_dom_I"/>
</dbReference>
<dbReference type="InterPro" id="IPR011914">
    <property type="entry name" value="RfaE_dom_II"/>
</dbReference>
<dbReference type="InterPro" id="IPR029056">
    <property type="entry name" value="Ribokinase-like"/>
</dbReference>
<dbReference type="InterPro" id="IPR014729">
    <property type="entry name" value="Rossmann-like_a/b/a_fold"/>
</dbReference>
<dbReference type="NCBIfam" id="TIGR00125">
    <property type="entry name" value="cyt_tran_rel"/>
    <property type="match status" value="1"/>
</dbReference>
<dbReference type="NCBIfam" id="TIGR02198">
    <property type="entry name" value="rfaE_dom_I"/>
    <property type="match status" value="1"/>
</dbReference>
<dbReference type="NCBIfam" id="TIGR02199">
    <property type="entry name" value="rfaE_dom_II"/>
    <property type="match status" value="1"/>
</dbReference>
<dbReference type="PANTHER" id="PTHR46969">
    <property type="entry name" value="BIFUNCTIONAL PROTEIN HLDE"/>
    <property type="match status" value="1"/>
</dbReference>
<dbReference type="PANTHER" id="PTHR46969:SF1">
    <property type="entry name" value="BIFUNCTIONAL PROTEIN HLDE"/>
    <property type="match status" value="1"/>
</dbReference>
<dbReference type="Pfam" id="PF01467">
    <property type="entry name" value="CTP_transf_like"/>
    <property type="match status" value="1"/>
</dbReference>
<dbReference type="Pfam" id="PF00294">
    <property type="entry name" value="PfkB"/>
    <property type="match status" value="1"/>
</dbReference>
<dbReference type="SUPFAM" id="SSF52374">
    <property type="entry name" value="Nucleotidylyl transferase"/>
    <property type="match status" value="1"/>
</dbReference>
<dbReference type="SUPFAM" id="SSF53613">
    <property type="entry name" value="Ribokinase-like"/>
    <property type="match status" value="1"/>
</dbReference>
<protein>
    <recommendedName>
        <fullName evidence="1">Bifunctional protein HldE</fullName>
    </recommendedName>
    <domain>
        <recommendedName>
            <fullName evidence="1">D-beta-D-heptose 7-phosphate kinase</fullName>
            <ecNumber evidence="1">2.7.1.167</ecNumber>
        </recommendedName>
        <alternativeName>
            <fullName evidence="1">D-beta-D-heptose 7-phosphotransferase</fullName>
        </alternativeName>
        <alternativeName>
            <fullName evidence="1">D-glycero-beta-D-manno-heptose-7-phosphate kinase</fullName>
        </alternativeName>
    </domain>
    <domain>
        <recommendedName>
            <fullName evidence="1">D-beta-D-heptose 1-phosphate adenylyltransferase</fullName>
            <ecNumber evidence="1">2.7.7.70</ecNumber>
        </recommendedName>
        <alternativeName>
            <fullName evidence="1">D-glycero-beta-D-manno-heptose 1-phosphate adenylyltransferase</fullName>
        </alternativeName>
    </domain>
</protein>
<keyword id="KW-0067">ATP-binding</keyword>
<keyword id="KW-0119">Carbohydrate metabolism</keyword>
<keyword id="KW-0418">Kinase</keyword>
<keyword id="KW-0448">Lipopolysaccharide biosynthesis</keyword>
<keyword id="KW-0511">Multifunctional enzyme</keyword>
<keyword id="KW-0547">Nucleotide-binding</keyword>
<keyword id="KW-0548">Nucleotidyltransferase</keyword>
<keyword id="KW-1185">Reference proteome</keyword>
<keyword id="KW-0808">Transferase</keyword>
<proteinExistence type="inferred from homology"/>
<gene>
    <name evidence="1" type="primary">hldE</name>
    <name type="synonym">rfaE</name>
    <name type="synonym">waaE</name>
    <name type="ordered locus">HP_0858</name>
</gene>
<reference key="1">
    <citation type="journal article" date="1997" name="Nature">
        <title>The complete genome sequence of the gastric pathogen Helicobacter pylori.</title>
        <authorList>
            <person name="Tomb J.-F."/>
            <person name="White O."/>
            <person name="Kerlavage A.R."/>
            <person name="Clayton R.A."/>
            <person name="Sutton G.G."/>
            <person name="Fleischmann R.D."/>
            <person name="Ketchum K.A."/>
            <person name="Klenk H.-P."/>
            <person name="Gill S.R."/>
            <person name="Dougherty B.A."/>
            <person name="Nelson K.E."/>
            <person name="Quackenbush J."/>
            <person name="Zhou L."/>
            <person name="Kirkness E.F."/>
            <person name="Peterson S.N."/>
            <person name="Loftus B.J."/>
            <person name="Richardson D.L."/>
            <person name="Dodson R.J."/>
            <person name="Khalak H.G."/>
            <person name="Glodek A."/>
            <person name="McKenney K."/>
            <person name="FitzGerald L.M."/>
            <person name="Lee N."/>
            <person name="Adams M.D."/>
            <person name="Hickey E.K."/>
            <person name="Berg D.E."/>
            <person name="Gocayne J.D."/>
            <person name="Utterback T.R."/>
            <person name="Peterson J.D."/>
            <person name="Kelley J.M."/>
            <person name="Cotton M.D."/>
            <person name="Weidman J.F."/>
            <person name="Fujii C."/>
            <person name="Bowman C."/>
            <person name="Watthey L."/>
            <person name="Wallin E."/>
            <person name="Hayes W.S."/>
            <person name="Borodovsky M."/>
            <person name="Karp P.D."/>
            <person name="Smith H.O."/>
            <person name="Fraser C.M."/>
            <person name="Venter J.C."/>
        </authorList>
    </citation>
    <scope>NUCLEOTIDE SEQUENCE [LARGE SCALE GENOMIC DNA]</scope>
    <source>
        <strain>ATCC 700392 / 26695</strain>
    </source>
</reference>